<sequence>MDQPAPAPEPMLLDAQPPAAVACDKKQQEGEAPYAEGNDAVTGHIISTTIGGKNGEPKRTISYMAERVVGTGSFGIVFQAKCLETGETVAIKKVLQDRRYKNRELQLMRAMDHPNVISLKHCFFSTTSRDELFLNLVMEYVPETLYRVLKHYSNANHRMPLIYVKLYMYQLFRGLAYIHTVPGVCHRDVKPQNVLVDPLTHQVKLCDFGSAKTLVPGEPNISYICSRYYRAPELIFGATEYTTSIDIWSAGCVLAELLLGQPLFPGESAVDQLVEIIKVLGTPTREEIRCMNPNYTEFRFPQIKAHPWHKVFHKRMPPEAIDLASRLLQYSPSLRCTALDACAHPFFDELREPNARLPNGRPFPPLFNFKHELANSSQELISRLIPEHVRRQATHNFFNTGS</sequence>
<feature type="chain" id="PRO_0000439008" description="Shaggy-related protein kinase GSK2">
    <location>
        <begin position="1"/>
        <end position="402"/>
    </location>
</feature>
<feature type="domain" description="Protein kinase" evidence="1">
    <location>
        <begin position="63"/>
        <end position="347"/>
    </location>
</feature>
<feature type="region of interest" description="Disordered" evidence="2">
    <location>
        <begin position="1"/>
        <end position="38"/>
    </location>
</feature>
<feature type="active site" description="Proton acceptor" evidence="1">
    <location>
        <position position="188"/>
    </location>
</feature>
<feature type="binding site" evidence="1">
    <location>
        <begin position="69"/>
        <end position="77"/>
    </location>
    <ligand>
        <name>ATP</name>
        <dbReference type="ChEBI" id="CHEBI:30616"/>
    </ligand>
</feature>
<feature type="binding site" evidence="1">
    <location>
        <position position="92"/>
    </location>
    <ligand>
        <name>ATP</name>
        <dbReference type="ChEBI" id="CHEBI:30616"/>
    </ligand>
</feature>
<feature type="mutagenesis site" description="Gain-of-function mutant." evidence="3">
    <original>T</original>
    <variation>I</variation>
    <location>
        <position position="284"/>
    </location>
</feature>
<feature type="mutagenesis site" description="Gain-of-function mutant." evidence="3">
    <original>E</original>
    <variation>K</variation>
    <location>
        <position position="286"/>
    </location>
</feature>
<proteinExistence type="evidence at protein level"/>
<accession>Q60EZ2</accession>
<protein>
    <recommendedName>
        <fullName evidence="11">Shaggy-related protein kinase GSK2</fullName>
        <ecNumber evidence="11">2.7.11.1</ecNumber>
    </recommendedName>
    <alternativeName>
        <fullName evidence="11">Glycogen synthase kinase3-like protein 2</fullName>
        <shortName evidence="9">OsGSK2</shortName>
    </alternativeName>
    <alternativeName>
        <fullName evidence="10">Shaggy/GSK3-like kinase 22</fullName>
        <shortName evidence="10">OsSK22</shortName>
    </alternativeName>
</protein>
<reference key="1">
    <citation type="journal article" date="2005" name="Mol. Genet. Genomics">
        <title>A fine physical map of the rice chromosome 5.</title>
        <authorList>
            <person name="Cheng C.-H."/>
            <person name="Chung M.C."/>
            <person name="Liu S.-M."/>
            <person name="Chen S.-K."/>
            <person name="Kao F.Y."/>
            <person name="Lin S.-J."/>
            <person name="Hsiao S.-H."/>
            <person name="Tseng I.C."/>
            <person name="Hsing Y.-I.C."/>
            <person name="Wu H.-P."/>
            <person name="Chen C.-S."/>
            <person name="Shaw J.-F."/>
            <person name="Wu J."/>
            <person name="Matsumoto T."/>
            <person name="Sasaki T."/>
            <person name="Chen H.-C."/>
            <person name="Chow T.-Y."/>
        </authorList>
    </citation>
    <scope>NUCLEOTIDE SEQUENCE [LARGE SCALE GENOMIC DNA]</scope>
    <source>
        <strain>cv. Nipponbare</strain>
    </source>
</reference>
<reference key="2">
    <citation type="journal article" date="2005" name="Nature">
        <title>The map-based sequence of the rice genome.</title>
        <authorList>
            <consortium name="International rice genome sequencing project (IRGSP)"/>
        </authorList>
    </citation>
    <scope>NUCLEOTIDE SEQUENCE [LARGE SCALE GENOMIC DNA]</scope>
    <source>
        <strain>cv. Nipponbare</strain>
    </source>
</reference>
<reference key="3">
    <citation type="journal article" date="2008" name="Nucleic Acids Res.">
        <title>The rice annotation project database (RAP-DB): 2008 update.</title>
        <authorList>
            <consortium name="The rice annotation project (RAP)"/>
        </authorList>
    </citation>
    <scope>GENOME REANNOTATION</scope>
    <source>
        <strain>cv. Nipponbare</strain>
    </source>
</reference>
<reference key="4">
    <citation type="journal article" date="2013" name="Rice">
        <title>Improvement of the Oryza sativa Nipponbare reference genome using next generation sequence and optical map data.</title>
        <authorList>
            <person name="Kawahara Y."/>
            <person name="de la Bastide M."/>
            <person name="Hamilton J.P."/>
            <person name="Kanamori H."/>
            <person name="McCombie W.R."/>
            <person name="Ouyang S."/>
            <person name="Schwartz D.C."/>
            <person name="Tanaka T."/>
            <person name="Wu J."/>
            <person name="Zhou S."/>
            <person name="Childs K.L."/>
            <person name="Davidson R.M."/>
            <person name="Lin H."/>
            <person name="Quesada-Ocampo L."/>
            <person name="Vaillancourt B."/>
            <person name="Sakai H."/>
            <person name="Lee S.S."/>
            <person name="Kim J."/>
            <person name="Numa H."/>
            <person name="Itoh T."/>
            <person name="Buell C.R."/>
            <person name="Matsumoto T."/>
        </authorList>
    </citation>
    <scope>GENOME REANNOTATION</scope>
    <source>
        <strain>cv. Nipponbare</strain>
    </source>
</reference>
<reference key="5">
    <citation type="journal article" date="2012" name="Plant Cell">
        <title>DWARF AND LOW-TILLERING acts as a direct downstream target of a GSK3/SHAGGY-like kinase to mediate brassinosteroid responses in rice.</title>
        <authorList>
            <person name="Tong H."/>
            <person name="Liu L."/>
            <person name="Jin Y."/>
            <person name="Du L."/>
            <person name="Yin Y."/>
            <person name="Qian Q."/>
            <person name="Zhu L."/>
            <person name="Chu C."/>
        </authorList>
    </citation>
    <scope>FUNCTION</scope>
    <scope>INTERACTION WITH DLT</scope>
    <scope>SUBCELLULAR LOCATION</scope>
    <scope>TISSUE SPECIFICITY</scope>
    <scope>MUTAGENESIS OF THR-284 AND GLU-286</scope>
</reference>
<reference key="6">
    <citation type="journal article" date="2015" name="Nat. Plants">
        <title>Control of grain size and rice yield by GL2-mediated brassinosteroid responses.</title>
        <authorList>
            <person name="Che R."/>
            <person name="Tong H."/>
            <person name="Shi B."/>
            <person name="Liu Y."/>
            <person name="Fang S."/>
            <person name="Liu D."/>
            <person name="Xiao Y."/>
            <person name="Hu B."/>
            <person name="Liu L."/>
            <person name="Wang H."/>
            <person name="Zhao M."/>
            <person name="Chu C."/>
        </authorList>
    </citation>
    <scope>INTERACTION WITH GRF4</scope>
</reference>
<reference key="7">
    <citation type="journal article" date="2016" name="PLoS Genet.">
        <title>OVATE family protein 8 positively mediates brassinosteroid signaling through interacting with the GSK3-like kinase in rice.</title>
        <authorList>
            <person name="Yang C."/>
            <person name="Shen W."/>
            <person name="He Y."/>
            <person name="Tian Z."/>
            <person name="Li J."/>
        </authorList>
    </citation>
    <scope>FUNCTION</scope>
    <scope>INTERACTION WITH OFP8</scope>
</reference>
<reference key="8">
    <citation type="journal article" date="2017" name="Plant Cell">
        <title>The RLA1/SMOS1 transcription factor functions with OsBZR1 to regulate brassinosteroid signaling and rice architecture.</title>
        <authorList>
            <person name="Qiao S."/>
            <person name="Sun S."/>
            <person name="Wang L."/>
            <person name="Wu Z."/>
            <person name="Li C."/>
            <person name="Li X."/>
            <person name="Wang T."/>
            <person name="Leng L."/>
            <person name="Tian W."/>
            <person name="Lu T."/>
            <person name="Wang X."/>
        </authorList>
    </citation>
    <scope>FUNCTION</scope>
    <scope>INTERACTION WITH SMOS1</scope>
</reference>
<reference key="9">
    <citation type="journal article" date="2019" name="Plant J.">
        <title>OsBZR1 turnover mediated by OsSK22-regulated U-box E3 ligase OsPUB24 in rice BR response.</title>
        <authorList>
            <person name="Min H.J."/>
            <person name="Cui L.H."/>
            <person name="Oh T.R."/>
            <person name="Kim J.H."/>
            <person name="Kim T.W."/>
            <person name="Kim W.T."/>
        </authorList>
    </citation>
    <scope>FUNCTION</scope>
    <scope>INTERACTION WITH PUB24</scope>
    <scope>AUTOPHOSPHORYLATION</scope>
</reference>
<comment type="function">
    <text evidence="3 5 7">Serine-threonine kinase that acts as a negative regulator of brassinosteroid (BR) signaling (PubMed:22685166, PubMed:27332964, PubMed:30920691). Phosphorylates DLT and BZR1, two positive regulators that mediates several BR responses. Phosphorylation of DLT and BZR1 inhibits their activities in BR signaling (PubMed:22685166). Phosphorylates OFP8, a positive regulator of BR responses. Phosphorylated OFP8 shuttles from the nucleus to the cytoplasm where it is degraded by the proteasome (PubMed:27332964). Phosphorylates the E3 ubiquitin-protein ligase PUB24, a negative regulator of BR signaling, which targets BZR1 and promotes its degradation via the 26S proteasome (PubMed:30920691). Phosphorylation of PUB24 increases its stability (PubMed:30920691). Phosphorylates the AP2-ERF transcription factor SMOS1, a positive regulator of BR signaling, which cooperatively functions in a transactivating complex with BZR1 to enhance the transcription of BR biosynthetic genes (PubMed:30920691). Phosphorylation of SMOS1 leads to its degradation by an unknown mechanism (PubMed:30920691).</text>
</comment>
<comment type="catalytic activity">
    <reaction evidence="11">
        <text>L-seryl-[protein] + ATP = O-phospho-L-seryl-[protein] + ADP + H(+)</text>
        <dbReference type="Rhea" id="RHEA:17989"/>
        <dbReference type="Rhea" id="RHEA-COMP:9863"/>
        <dbReference type="Rhea" id="RHEA-COMP:11604"/>
        <dbReference type="ChEBI" id="CHEBI:15378"/>
        <dbReference type="ChEBI" id="CHEBI:29999"/>
        <dbReference type="ChEBI" id="CHEBI:30616"/>
        <dbReference type="ChEBI" id="CHEBI:83421"/>
        <dbReference type="ChEBI" id="CHEBI:456216"/>
        <dbReference type="EC" id="2.7.11.1"/>
    </reaction>
</comment>
<comment type="catalytic activity">
    <reaction evidence="11">
        <text>L-threonyl-[protein] + ATP = O-phospho-L-threonyl-[protein] + ADP + H(+)</text>
        <dbReference type="Rhea" id="RHEA:46608"/>
        <dbReference type="Rhea" id="RHEA-COMP:11060"/>
        <dbReference type="Rhea" id="RHEA-COMP:11605"/>
        <dbReference type="ChEBI" id="CHEBI:15378"/>
        <dbReference type="ChEBI" id="CHEBI:30013"/>
        <dbReference type="ChEBI" id="CHEBI:30616"/>
        <dbReference type="ChEBI" id="CHEBI:61977"/>
        <dbReference type="ChEBI" id="CHEBI:456216"/>
        <dbReference type="EC" id="2.7.11.1"/>
    </reaction>
</comment>
<comment type="subunit">
    <text evidence="3 4 5 6 7">Interacts with DLT (PubMed:22685166). Interacts with OFP8 (PubMed:27332964). Interacts with GRF4 (PubMed:27250747). Interacts with PUB24 (PubMed:30920691). Interacts with SMOS1 (PubMed:28100707).</text>
</comment>
<comment type="subcellular location">
    <subcellularLocation>
        <location evidence="3">Cytoplasm</location>
    </subcellularLocation>
    <subcellularLocation>
        <location evidence="3">Nucleus</location>
    </subcellularLocation>
</comment>
<comment type="tissue specificity">
    <text evidence="3">Expressed in lamina joints, vascular tissue and nodes.</text>
</comment>
<comment type="PTM">
    <text evidence="7">Autophosphorylated.</text>
</comment>
<comment type="miscellaneous">
    <text evidence="3">Plants over-expressing GSK2 display typical brassinosteroid (BR) loss-of-function phenotypes, and plants silencing GSK2 have enhanced BR signaling phenotypes.</text>
</comment>
<comment type="similarity">
    <text evidence="11">Belongs to the protein kinase superfamily. CMGC Ser/Thr protein kinase family. GSK-3 subfamily.</text>
</comment>
<organism>
    <name type="scientific">Oryza sativa subsp. japonica</name>
    <name type="common">Rice</name>
    <dbReference type="NCBI Taxonomy" id="39947"/>
    <lineage>
        <taxon>Eukaryota</taxon>
        <taxon>Viridiplantae</taxon>
        <taxon>Streptophyta</taxon>
        <taxon>Embryophyta</taxon>
        <taxon>Tracheophyta</taxon>
        <taxon>Spermatophyta</taxon>
        <taxon>Magnoliopsida</taxon>
        <taxon>Liliopsida</taxon>
        <taxon>Poales</taxon>
        <taxon>Poaceae</taxon>
        <taxon>BOP clade</taxon>
        <taxon>Oryzoideae</taxon>
        <taxon>Oryzeae</taxon>
        <taxon>Oryzinae</taxon>
        <taxon>Oryza</taxon>
        <taxon>Oryza sativa</taxon>
    </lineage>
</organism>
<name>GSK2_ORYSJ</name>
<dbReference type="EC" id="2.7.11.1" evidence="11"/>
<dbReference type="EMBL" id="AC104280">
    <property type="protein sequence ID" value="AAU90187.1"/>
    <property type="molecule type" value="Genomic_DNA"/>
</dbReference>
<dbReference type="EMBL" id="AP008211">
    <property type="protein sequence ID" value="BAF16815.1"/>
    <property type="molecule type" value="Genomic_DNA"/>
</dbReference>
<dbReference type="EMBL" id="AP014961">
    <property type="protein sequence ID" value="BAS92763.1"/>
    <property type="molecule type" value="Genomic_DNA"/>
</dbReference>
<dbReference type="RefSeq" id="XP_015637571.1">
    <property type="nucleotide sequence ID" value="XM_015782085.1"/>
</dbReference>
<dbReference type="SMR" id="Q60EZ2"/>
<dbReference type="FunCoup" id="Q60EZ2">
    <property type="interactions" value="2680"/>
</dbReference>
<dbReference type="STRING" id="39947.Q60EZ2"/>
<dbReference type="iPTMnet" id="Q60EZ2"/>
<dbReference type="PaxDb" id="39947-Q60EZ2"/>
<dbReference type="EnsemblPlants" id="Os05t0207500-01">
    <property type="protein sequence ID" value="Os05t0207500-01"/>
    <property type="gene ID" value="Os05g0207500"/>
</dbReference>
<dbReference type="Gramene" id="Os05t0207500-01">
    <property type="protein sequence ID" value="Os05t0207500-01"/>
    <property type="gene ID" value="Os05g0207500"/>
</dbReference>
<dbReference type="KEGG" id="dosa:Os05g0207500"/>
<dbReference type="eggNOG" id="KOG0658">
    <property type="taxonomic scope" value="Eukaryota"/>
</dbReference>
<dbReference type="HOGENOM" id="CLU_000288_181_20_1"/>
<dbReference type="InParanoid" id="Q60EZ2"/>
<dbReference type="OMA" id="YVKLYMF"/>
<dbReference type="OrthoDB" id="272141at2759"/>
<dbReference type="Proteomes" id="UP000000763">
    <property type="component" value="Chromosome 5"/>
</dbReference>
<dbReference type="Proteomes" id="UP000059680">
    <property type="component" value="Chromosome 5"/>
</dbReference>
<dbReference type="GO" id="GO:0005737">
    <property type="term" value="C:cytoplasm"/>
    <property type="evidence" value="ECO:0000314"/>
    <property type="project" value="UniProtKB"/>
</dbReference>
<dbReference type="GO" id="GO:0005634">
    <property type="term" value="C:nucleus"/>
    <property type="evidence" value="ECO:0000314"/>
    <property type="project" value="UniProtKB"/>
</dbReference>
<dbReference type="GO" id="GO:0005524">
    <property type="term" value="F:ATP binding"/>
    <property type="evidence" value="ECO:0007669"/>
    <property type="project" value="UniProtKB-KW"/>
</dbReference>
<dbReference type="GO" id="GO:0004672">
    <property type="term" value="F:protein kinase activity"/>
    <property type="evidence" value="ECO:0000314"/>
    <property type="project" value="UniProtKB"/>
</dbReference>
<dbReference type="GO" id="GO:0106310">
    <property type="term" value="F:protein serine kinase activity"/>
    <property type="evidence" value="ECO:0007669"/>
    <property type="project" value="RHEA"/>
</dbReference>
<dbReference type="GO" id="GO:0004674">
    <property type="term" value="F:protein serine/threonine kinase activity"/>
    <property type="evidence" value="ECO:0000318"/>
    <property type="project" value="GO_Central"/>
</dbReference>
<dbReference type="GO" id="GO:0009742">
    <property type="term" value="P:brassinosteroid mediated signaling pathway"/>
    <property type="evidence" value="ECO:0000318"/>
    <property type="project" value="GO_Central"/>
</dbReference>
<dbReference type="GO" id="GO:0030154">
    <property type="term" value="P:cell differentiation"/>
    <property type="evidence" value="ECO:0000318"/>
    <property type="project" value="GO_Central"/>
</dbReference>
<dbReference type="GO" id="GO:1900458">
    <property type="term" value="P:negative regulation of brassinosteroid mediated signaling pathway"/>
    <property type="evidence" value="ECO:0000315"/>
    <property type="project" value="UniProtKB"/>
</dbReference>
<dbReference type="CDD" id="cd14137">
    <property type="entry name" value="STKc_GSK3"/>
    <property type="match status" value="1"/>
</dbReference>
<dbReference type="FunFam" id="3.30.200.20:FF:000009">
    <property type="entry name" value="Glycogen synthase kinase-3 beta"/>
    <property type="match status" value="1"/>
</dbReference>
<dbReference type="FunFam" id="1.10.510.10:FF:000082">
    <property type="entry name" value="Shaggy-related protein kinase kappa"/>
    <property type="match status" value="1"/>
</dbReference>
<dbReference type="Gene3D" id="3.30.200.20">
    <property type="entry name" value="Phosphorylase Kinase, domain 1"/>
    <property type="match status" value="1"/>
</dbReference>
<dbReference type="Gene3D" id="1.10.510.10">
    <property type="entry name" value="Transferase(Phosphotransferase) domain 1"/>
    <property type="match status" value="1"/>
</dbReference>
<dbReference type="InterPro" id="IPR050591">
    <property type="entry name" value="GSK-3"/>
</dbReference>
<dbReference type="InterPro" id="IPR011009">
    <property type="entry name" value="Kinase-like_dom_sf"/>
</dbReference>
<dbReference type="InterPro" id="IPR000719">
    <property type="entry name" value="Prot_kinase_dom"/>
</dbReference>
<dbReference type="InterPro" id="IPR017441">
    <property type="entry name" value="Protein_kinase_ATP_BS"/>
</dbReference>
<dbReference type="InterPro" id="IPR008271">
    <property type="entry name" value="Ser/Thr_kinase_AS"/>
</dbReference>
<dbReference type="InterPro" id="IPR039192">
    <property type="entry name" value="STKc_GSK3"/>
</dbReference>
<dbReference type="PANTHER" id="PTHR24057">
    <property type="entry name" value="GLYCOGEN SYNTHASE KINASE-3 ALPHA"/>
    <property type="match status" value="1"/>
</dbReference>
<dbReference type="PANTHER" id="PTHR24057:SF74">
    <property type="entry name" value="SHAGGY-RELATED PROTEIN KINASE GSK2"/>
    <property type="match status" value="1"/>
</dbReference>
<dbReference type="Pfam" id="PF00069">
    <property type="entry name" value="Pkinase"/>
    <property type="match status" value="1"/>
</dbReference>
<dbReference type="SMART" id="SM00220">
    <property type="entry name" value="S_TKc"/>
    <property type="match status" value="1"/>
</dbReference>
<dbReference type="SUPFAM" id="SSF56112">
    <property type="entry name" value="Protein kinase-like (PK-like)"/>
    <property type="match status" value="1"/>
</dbReference>
<dbReference type="PROSITE" id="PS00107">
    <property type="entry name" value="PROTEIN_KINASE_ATP"/>
    <property type="match status" value="1"/>
</dbReference>
<dbReference type="PROSITE" id="PS50011">
    <property type="entry name" value="PROTEIN_KINASE_DOM"/>
    <property type="match status" value="1"/>
</dbReference>
<dbReference type="PROSITE" id="PS00108">
    <property type="entry name" value="PROTEIN_KINASE_ST"/>
    <property type="match status" value="1"/>
</dbReference>
<keyword id="KW-0067">ATP-binding</keyword>
<keyword id="KW-0963">Cytoplasm</keyword>
<keyword id="KW-0418">Kinase</keyword>
<keyword id="KW-0547">Nucleotide-binding</keyword>
<keyword id="KW-0539">Nucleus</keyword>
<keyword id="KW-0597">Phosphoprotein</keyword>
<keyword id="KW-1185">Reference proteome</keyword>
<keyword id="KW-0723">Serine/threonine-protein kinase</keyword>
<keyword id="KW-0808">Transferase</keyword>
<gene>
    <name evidence="8" type="primary">GSK2</name>
    <name evidence="10" type="synonym">SK22</name>
    <name evidence="13" type="ordered locus">Os05g0207500</name>
    <name evidence="11" type="ordered locus">LOC_Os05g11730</name>
    <name evidence="12" type="ORF">OJ1430_B02.4</name>
</gene>
<evidence type="ECO:0000255" key="1">
    <source>
        <dbReference type="PROSITE-ProRule" id="PRU00159"/>
    </source>
</evidence>
<evidence type="ECO:0000256" key="2">
    <source>
        <dbReference type="SAM" id="MobiDB-lite"/>
    </source>
</evidence>
<evidence type="ECO:0000269" key="3">
    <source>
    </source>
</evidence>
<evidence type="ECO:0000269" key="4">
    <source>
    </source>
</evidence>
<evidence type="ECO:0000269" key="5">
    <source>
    </source>
</evidence>
<evidence type="ECO:0000269" key="6">
    <source>
    </source>
</evidence>
<evidence type="ECO:0000269" key="7">
    <source>
    </source>
</evidence>
<evidence type="ECO:0000303" key="8">
    <source>
    </source>
</evidence>
<evidence type="ECO:0000303" key="9">
    <source>
    </source>
</evidence>
<evidence type="ECO:0000303" key="10">
    <source>
    </source>
</evidence>
<evidence type="ECO:0000305" key="11"/>
<evidence type="ECO:0000312" key="12">
    <source>
        <dbReference type="EMBL" id="AAU90187.1"/>
    </source>
</evidence>
<evidence type="ECO:0000312" key="13">
    <source>
        <dbReference type="EMBL" id="BAF16815.1"/>
    </source>
</evidence>